<dbReference type="EC" id="2.1.1.228" evidence="1"/>
<dbReference type="EMBL" id="CR628336">
    <property type="protein sequence ID" value="CAH11612.1"/>
    <property type="molecule type" value="Genomic_DNA"/>
</dbReference>
<dbReference type="RefSeq" id="WP_011213050.1">
    <property type="nucleotide sequence ID" value="NC_006368.1"/>
</dbReference>
<dbReference type="SMR" id="Q5X7Z1"/>
<dbReference type="KEGG" id="lpp:lpp0464"/>
<dbReference type="LegioList" id="lpp0464"/>
<dbReference type="HOGENOM" id="CLU_047363_0_1_6"/>
<dbReference type="GO" id="GO:0005829">
    <property type="term" value="C:cytosol"/>
    <property type="evidence" value="ECO:0007669"/>
    <property type="project" value="TreeGrafter"/>
</dbReference>
<dbReference type="GO" id="GO:0052906">
    <property type="term" value="F:tRNA (guanine(37)-N1)-methyltransferase activity"/>
    <property type="evidence" value="ECO:0007669"/>
    <property type="project" value="UniProtKB-UniRule"/>
</dbReference>
<dbReference type="GO" id="GO:0002939">
    <property type="term" value="P:tRNA N1-guanine methylation"/>
    <property type="evidence" value="ECO:0007669"/>
    <property type="project" value="TreeGrafter"/>
</dbReference>
<dbReference type="CDD" id="cd18080">
    <property type="entry name" value="TrmD-like"/>
    <property type="match status" value="1"/>
</dbReference>
<dbReference type="FunFam" id="1.10.1270.20:FF:000001">
    <property type="entry name" value="tRNA (guanine-N(1)-)-methyltransferase"/>
    <property type="match status" value="1"/>
</dbReference>
<dbReference type="FunFam" id="3.40.1280.10:FF:000001">
    <property type="entry name" value="tRNA (guanine-N(1)-)-methyltransferase"/>
    <property type="match status" value="1"/>
</dbReference>
<dbReference type="Gene3D" id="3.40.1280.10">
    <property type="match status" value="1"/>
</dbReference>
<dbReference type="Gene3D" id="1.10.1270.20">
    <property type="entry name" value="tRNA(m1g37)methyltransferase, domain 2"/>
    <property type="match status" value="1"/>
</dbReference>
<dbReference type="HAMAP" id="MF_00605">
    <property type="entry name" value="TrmD"/>
    <property type="match status" value="1"/>
</dbReference>
<dbReference type="InterPro" id="IPR029028">
    <property type="entry name" value="Alpha/beta_knot_MTases"/>
</dbReference>
<dbReference type="InterPro" id="IPR023148">
    <property type="entry name" value="tRNA_m1G_MeTrfase_C_sf"/>
</dbReference>
<dbReference type="InterPro" id="IPR002649">
    <property type="entry name" value="tRNA_m1G_MeTrfase_TrmD"/>
</dbReference>
<dbReference type="InterPro" id="IPR029026">
    <property type="entry name" value="tRNA_m1G_MTases_N"/>
</dbReference>
<dbReference type="InterPro" id="IPR016009">
    <property type="entry name" value="tRNA_MeTrfase_TRMD/TRM10"/>
</dbReference>
<dbReference type="NCBIfam" id="NF000648">
    <property type="entry name" value="PRK00026.1"/>
    <property type="match status" value="1"/>
</dbReference>
<dbReference type="NCBIfam" id="TIGR00088">
    <property type="entry name" value="trmD"/>
    <property type="match status" value="1"/>
</dbReference>
<dbReference type="PANTHER" id="PTHR46417">
    <property type="entry name" value="TRNA (GUANINE-N(1)-)-METHYLTRANSFERASE"/>
    <property type="match status" value="1"/>
</dbReference>
<dbReference type="PANTHER" id="PTHR46417:SF1">
    <property type="entry name" value="TRNA (GUANINE-N(1)-)-METHYLTRANSFERASE"/>
    <property type="match status" value="1"/>
</dbReference>
<dbReference type="Pfam" id="PF01746">
    <property type="entry name" value="tRNA_m1G_MT"/>
    <property type="match status" value="1"/>
</dbReference>
<dbReference type="PIRSF" id="PIRSF000386">
    <property type="entry name" value="tRNA_mtase"/>
    <property type="match status" value="1"/>
</dbReference>
<dbReference type="SUPFAM" id="SSF75217">
    <property type="entry name" value="alpha/beta knot"/>
    <property type="match status" value="1"/>
</dbReference>
<evidence type="ECO:0000255" key="1">
    <source>
        <dbReference type="HAMAP-Rule" id="MF_00605"/>
    </source>
</evidence>
<keyword id="KW-0963">Cytoplasm</keyword>
<keyword id="KW-0489">Methyltransferase</keyword>
<keyword id="KW-0949">S-adenosyl-L-methionine</keyword>
<keyword id="KW-0808">Transferase</keyword>
<keyword id="KW-0819">tRNA processing</keyword>
<sequence>MALHLGVITLLPEIIQGIHYGVTGRAIEQGLVKIDCWNPRDWSSRPYKQVDDKPYGGGPGMVMMYEPLHAAIKHARSEMKENCKTIYLSPQGKVVRQNDLKQIAIQKQSLLFVAGRYEGIDERIINHHIDEEWSLGDFVLSGGELAAMVFIDAIIRLIPGSLGHLGSAEQDSFMNGLLDCPHYTRPATINGLDVPDVLLGGNHKEIERWRRKQSLGKTWLKRPDLLEKIQLSETDKQLLAEFKCEHGDSC</sequence>
<feature type="chain" id="PRO_0000060396" description="tRNA (guanine-N(1)-)-methyltransferase">
    <location>
        <begin position="1"/>
        <end position="250"/>
    </location>
</feature>
<feature type="binding site" evidence="1">
    <location>
        <position position="115"/>
    </location>
    <ligand>
        <name>S-adenosyl-L-methionine</name>
        <dbReference type="ChEBI" id="CHEBI:59789"/>
    </ligand>
</feature>
<feature type="binding site" evidence="1">
    <location>
        <begin position="135"/>
        <end position="140"/>
    </location>
    <ligand>
        <name>S-adenosyl-L-methionine</name>
        <dbReference type="ChEBI" id="CHEBI:59789"/>
    </ligand>
</feature>
<organism>
    <name type="scientific">Legionella pneumophila (strain Paris)</name>
    <dbReference type="NCBI Taxonomy" id="297246"/>
    <lineage>
        <taxon>Bacteria</taxon>
        <taxon>Pseudomonadati</taxon>
        <taxon>Pseudomonadota</taxon>
        <taxon>Gammaproteobacteria</taxon>
        <taxon>Legionellales</taxon>
        <taxon>Legionellaceae</taxon>
        <taxon>Legionella</taxon>
    </lineage>
</organism>
<name>TRMD_LEGPA</name>
<proteinExistence type="inferred from homology"/>
<gene>
    <name evidence="1" type="primary">trmD</name>
    <name type="ordered locus">lpp0464</name>
</gene>
<accession>Q5X7Z1</accession>
<protein>
    <recommendedName>
        <fullName evidence="1">tRNA (guanine-N(1)-)-methyltransferase</fullName>
        <ecNumber evidence="1">2.1.1.228</ecNumber>
    </recommendedName>
    <alternativeName>
        <fullName evidence="1">M1G-methyltransferase</fullName>
    </alternativeName>
    <alternativeName>
        <fullName evidence="1">tRNA [GM37] methyltransferase</fullName>
    </alternativeName>
</protein>
<reference key="1">
    <citation type="journal article" date="2004" name="Nat. Genet.">
        <title>Evidence in the Legionella pneumophila genome for exploitation of host cell functions and high genome plasticity.</title>
        <authorList>
            <person name="Cazalet C."/>
            <person name="Rusniok C."/>
            <person name="Brueggemann H."/>
            <person name="Zidane N."/>
            <person name="Magnier A."/>
            <person name="Ma L."/>
            <person name="Tichit M."/>
            <person name="Jarraud S."/>
            <person name="Bouchier C."/>
            <person name="Vandenesch F."/>
            <person name="Kunst F."/>
            <person name="Etienne J."/>
            <person name="Glaser P."/>
            <person name="Buchrieser C."/>
        </authorList>
    </citation>
    <scope>NUCLEOTIDE SEQUENCE [LARGE SCALE GENOMIC DNA]</scope>
    <source>
        <strain>Paris</strain>
    </source>
</reference>
<comment type="function">
    <text evidence="1">Specifically methylates guanosine-37 in various tRNAs.</text>
</comment>
<comment type="catalytic activity">
    <reaction evidence="1">
        <text>guanosine(37) in tRNA + S-adenosyl-L-methionine = N(1)-methylguanosine(37) in tRNA + S-adenosyl-L-homocysteine + H(+)</text>
        <dbReference type="Rhea" id="RHEA:36899"/>
        <dbReference type="Rhea" id="RHEA-COMP:10145"/>
        <dbReference type="Rhea" id="RHEA-COMP:10147"/>
        <dbReference type="ChEBI" id="CHEBI:15378"/>
        <dbReference type="ChEBI" id="CHEBI:57856"/>
        <dbReference type="ChEBI" id="CHEBI:59789"/>
        <dbReference type="ChEBI" id="CHEBI:73542"/>
        <dbReference type="ChEBI" id="CHEBI:74269"/>
        <dbReference type="EC" id="2.1.1.228"/>
    </reaction>
</comment>
<comment type="subunit">
    <text evidence="1">Homodimer.</text>
</comment>
<comment type="subcellular location">
    <subcellularLocation>
        <location evidence="1">Cytoplasm</location>
    </subcellularLocation>
</comment>
<comment type="similarity">
    <text evidence="1">Belongs to the RNA methyltransferase TrmD family.</text>
</comment>